<proteinExistence type="inferred from homology"/>
<gene>
    <name evidence="1" type="primary">sepS</name>
    <name type="ordered locus">Mhun_2839</name>
</gene>
<keyword id="KW-0030">Aminoacyl-tRNA synthetase</keyword>
<keyword id="KW-0067">ATP-binding</keyword>
<keyword id="KW-0436">Ligase</keyword>
<keyword id="KW-0547">Nucleotide-binding</keyword>
<keyword id="KW-0648">Protein biosynthesis</keyword>
<keyword id="KW-1185">Reference proteome</keyword>
<accession>Q2FSR2</accession>
<comment type="function">
    <text evidence="1">Catalyzes the attachment of O-phosphoserine (Sep) to tRNA(Cys).</text>
</comment>
<comment type="catalytic activity">
    <reaction evidence="1">
        <text>tRNA(Cys) + O-phospho-L-serine + ATP = O-phospho-L-seryl-tRNA(Cys) + AMP + diphosphate</text>
        <dbReference type="Rhea" id="RHEA:25678"/>
        <dbReference type="Rhea" id="RHEA-COMP:9661"/>
        <dbReference type="Rhea" id="RHEA-COMP:9719"/>
        <dbReference type="ChEBI" id="CHEBI:30616"/>
        <dbReference type="ChEBI" id="CHEBI:33019"/>
        <dbReference type="ChEBI" id="CHEBI:57524"/>
        <dbReference type="ChEBI" id="CHEBI:78442"/>
        <dbReference type="ChEBI" id="CHEBI:78551"/>
        <dbReference type="ChEBI" id="CHEBI:456215"/>
        <dbReference type="EC" id="6.1.1.27"/>
    </reaction>
</comment>
<comment type="subunit">
    <text evidence="1">Homotetramer. Interacts with SepCysS.</text>
</comment>
<comment type="similarity">
    <text evidence="1">Belongs to the class-II aminoacyl-tRNA synthetase family. O-phosphoseryl-tRNA(Cys) synthetase subfamily.</text>
</comment>
<organism>
    <name type="scientific">Methanospirillum hungatei JF-1 (strain ATCC 27890 / DSM 864 / NBRC 100397 / JF-1)</name>
    <dbReference type="NCBI Taxonomy" id="323259"/>
    <lineage>
        <taxon>Archaea</taxon>
        <taxon>Methanobacteriati</taxon>
        <taxon>Methanobacteriota</taxon>
        <taxon>Stenosarchaea group</taxon>
        <taxon>Methanomicrobia</taxon>
        <taxon>Methanomicrobiales</taxon>
        <taxon>Methanospirillaceae</taxon>
        <taxon>Methanospirillum</taxon>
    </lineage>
</organism>
<dbReference type="EC" id="6.1.1.27" evidence="1"/>
<dbReference type="EMBL" id="CP000254">
    <property type="protein sequence ID" value="ABD42531.1"/>
    <property type="molecule type" value="Genomic_DNA"/>
</dbReference>
<dbReference type="RefSeq" id="WP_011449785.1">
    <property type="nucleotide sequence ID" value="NC_007796.1"/>
</dbReference>
<dbReference type="SMR" id="Q2FSR2"/>
<dbReference type="FunCoup" id="Q2FSR2">
    <property type="interactions" value="22"/>
</dbReference>
<dbReference type="STRING" id="323259.Mhun_2839"/>
<dbReference type="EnsemblBacteria" id="ABD42531">
    <property type="protein sequence ID" value="ABD42531"/>
    <property type="gene ID" value="Mhun_2839"/>
</dbReference>
<dbReference type="GeneID" id="3923108"/>
<dbReference type="KEGG" id="mhu:Mhun_2839"/>
<dbReference type="eggNOG" id="arCOG00411">
    <property type="taxonomic scope" value="Archaea"/>
</dbReference>
<dbReference type="HOGENOM" id="CLU_506822_0_0_2"/>
<dbReference type="InParanoid" id="Q2FSR2"/>
<dbReference type="OrthoDB" id="145125at2157"/>
<dbReference type="Proteomes" id="UP000001941">
    <property type="component" value="Chromosome"/>
</dbReference>
<dbReference type="GO" id="GO:0005524">
    <property type="term" value="F:ATP binding"/>
    <property type="evidence" value="ECO:0007669"/>
    <property type="project" value="UniProtKB-UniRule"/>
</dbReference>
<dbReference type="GO" id="GO:0043816">
    <property type="term" value="F:phosphoserine-tRNA(Cys) ligase activity"/>
    <property type="evidence" value="ECO:0007669"/>
    <property type="project" value="UniProtKB-EC"/>
</dbReference>
<dbReference type="GO" id="GO:0000049">
    <property type="term" value="F:tRNA binding"/>
    <property type="evidence" value="ECO:0007669"/>
    <property type="project" value="InterPro"/>
</dbReference>
<dbReference type="GO" id="GO:0006412">
    <property type="term" value="P:translation"/>
    <property type="evidence" value="ECO:0007669"/>
    <property type="project" value="UniProtKB-KW"/>
</dbReference>
<dbReference type="GO" id="GO:0043039">
    <property type="term" value="P:tRNA aminoacylation"/>
    <property type="evidence" value="ECO:0007669"/>
    <property type="project" value="UniProtKB-UniRule"/>
</dbReference>
<dbReference type="Gene3D" id="6.20.250.20">
    <property type="match status" value="1"/>
</dbReference>
<dbReference type="Gene3D" id="3.30.930.10">
    <property type="entry name" value="Bira Bifunctional Protein, Domain 2"/>
    <property type="match status" value="1"/>
</dbReference>
<dbReference type="HAMAP" id="MF_01674">
    <property type="entry name" value="Sep_tRNA_synth"/>
    <property type="match status" value="1"/>
</dbReference>
<dbReference type="InterPro" id="IPR006195">
    <property type="entry name" value="aa-tRNA-synth_II"/>
</dbReference>
<dbReference type="InterPro" id="IPR045864">
    <property type="entry name" value="aa-tRNA-synth_II/BPL/LPL"/>
</dbReference>
<dbReference type="InterPro" id="IPR005246">
    <property type="entry name" value="O-Pseryl-tRNA(Cys)_ligase"/>
</dbReference>
<dbReference type="InterPro" id="IPR002319">
    <property type="entry name" value="Phenylalanyl-tRNA_Synthase"/>
</dbReference>
<dbReference type="InterPro" id="IPR041590">
    <property type="entry name" value="SepRS_C"/>
</dbReference>
<dbReference type="NCBIfam" id="TIGR00470">
    <property type="entry name" value="sepS"/>
    <property type="match status" value="1"/>
</dbReference>
<dbReference type="Pfam" id="PF18006">
    <property type="entry name" value="SepRS_C"/>
    <property type="match status" value="1"/>
</dbReference>
<dbReference type="Pfam" id="PF01409">
    <property type="entry name" value="tRNA-synt_2d"/>
    <property type="match status" value="1"/>
</dbReference>
<dbReference type="SUPFAM" id="SSF55681">
    <property type="entry name" value="Class II aaRS and biotin synthetases"/>
    <property type="match status" value="1"/>
</dbReference>
<dbReference type="PROSITE" id="PS50862">
    <property type="entry name" value="AA_TRNA_LIGASE_II"/>
    <property type="match status" value="1"/>
</dbReference>
<protein>
    <recommendedName>
        <fullName evidence="1">O-phosphoserine--tRNA(Cys) ligase</fullName>
        <shortName evidence="1">O-phosphoserine--tRNA ligase</shortName>
        <ecNumber evidence="1">6.1.1.27</ecNumber>
    </recommendedName>
    <alternativeName>
        <fullName evidence="1">Non-canonical O-phosphoseryl-tRNA(Cys) synthetase</fullName>
    </alternativeName>
    <alternativeName>
        <fullName evidence="1">O-phosphoseryl-tRNA(Cys) synthetase</fullName>
        <shortName evidence="1">SepRS</shortName>
    </alternativeName>
</protein>
<evidence type="ECO:0000255" key="1">
    <source>
        <dbReference type="HAMAP-Rule" id="MF_01674"/>
    </source>
</evidence>
<feature type="chain" id="PRO_0000363763" description="O-phosphoserine--tRNA(Cys) ligase">
    <location>
        <begin position="1"/>
        <end position="531"/>
    </location>
</feature>
<feature type="binding site" evidence="1">
    <location>
        <begin position="189"/>
        <end position="191"/>
    </location>
    <ligand>
        <name>substrate</name>
    </ligand>
</feature>
<feature type="binding site" evidence="1">
    <location>
        <begin position="234"/>
        <end position="236"/>
    </location>
    <ligand>
        <name>substrate</name>
    </ligand>
</feature>
<feature type="binding site" evidence="1">
    <location>
        <begin position="276"/>
        <end position="277"/>
    </location>
    <ligand>
        <name>substrate</name>
    </ligand>
</feature>
<feature type="binding site" evidence="1">
    <location>
        <position position="319"/>
    </location>
    <ligand>
        <name>substrate</name>
    </ligand>
</feature>
<sequence>MIFDTEEFKKRGKEDFESAWHAGPSVLTPPTTDLMYPRLTYLRAQAHPVFETIHRLREAYLAIGFQEAENPIIVDEQEVYRQFGPEAMAVLDRVFYLGGLPRPNVGIGKEQIQKINSILGRDLSEDEEESLRKTLHAYKKSEIDGDELAYELSGVLHTDDARIVEILDRVFPEFRALKPESSRQTLRSHMTSGWFQTLGAIWEKVPHPIRLFSIDRCFRREQAEDSHRLMSYHSASCVVAGEYVTIEDGKAVARALLSAFGYTDFEFRPDDKRSKYYMPDTQTEVYAAHPDHGWVEVATFGIYSPVALAEYGVGIPVMNLGLGVERMAMIMNKAKDVRELCFPQFFPIRYTDTELAAGVSLLAEPATTPGKNLVRSLINTAVTHSTAIGPCSFVAFEGEIAGKQIRVYVEEPEENAKLLGPACMNEIFVHKGAILGVPDTEKFAEVRKNGISTGISYLFAAASQAAAEIEQAAHFGIPTTVQIKMARLPGDINLKIEPWVMRYITDNNLKTDVRGPVFLTIRSEVLPTSEV</sequence>
<reference key="1">
    <citation type="journal article" date="2016" name="Stand. Genomic Sci.">
        <title>Complete genome sequence of Methanospirillum hungatei type strain JF1.</title>
        <authorList>
            <person name="Gunsalus R.P."/>
            <person name="Cook L.E."/>
            <person name="Crable B."/>
            <person name="Rohlin L."/>
            <person name="McDonald E."/>
            <person name="Mouttaki H."/>
            <person name="Sieber J.R."/>
            <person name="Poweleit N."/>
            <person name="Zhou H."/>
            <person name="Lapidus A.L."/>
            <person name="Daligault H.E."/>
            <person name="Land M."/>
            <person name="Gilna P."/>
            <person name="Ivanova N."/>
            <person name="Kyrpides N."/>
            <person name="Culley D.E."/>
            <person name="McInerney M.J."/>
        </authorList>
    </citation>
    <scope>NUCLEOTIDE SEQUENCE [LARGE SCALE GENOMIC DNA]</scope>
    <source>
        <strain>ATCC 27890 / DSM 864 / NBRC 100397 / JF-1</strain>
    </source>
</reference>
<name>SEPS_METHJ</name>